<sequence length="1025" mass="111055">MKFFALFIYRPVATILLSVAITLCGILGFRMLPVAPLPQVDFPVIMVSASLPGASPETMASSVATPLERSLGRIAGVSEMTSSSSLGSTRIILQFDFDRDINGAARDVQAAINAAQSLLPSGMPSRPTYRKANPSDAPIMILTLTSDTYSQGELYDFASTQLAPTISQIDGVGDVDVGGSSLPAVRVGLNPQALFNQGVSLDDVRTAISNANVRKPQGALEDGTHRWQIQTNDELKTAAEYQPLIIHYNNGGAVRLGDVATVTDSVQDVRNAGMTNAKPAILLMIRKLPEANIIQTVDSIRAKLPELQETIPAAIDLQIAQDRSPTIRASLEEVEQTLIISVALVILVVFLFLRSGRATIIPAVVVPVSLIGTFAAMYLCGFSLNNLSLMALTIATGFVVDDAIVVLENIARHLEAGMKPLQAALQGTREVGFTVLSMSLSLVAVFLPLLLMGGLPGRLLREFAVTLSVAIGISLLVSLTLTPMMCGWMLKASKPREQKRLRGFGRMLVALQQGYGKSLKWVLNHTRLVGVVLLGTIALNIWLYISIPKTFFPEQDTGVLMGGIQADQSISFQAMRGKLQDFMKIIRDDPAVDNVTGFTGGSRVNSGMMFITLKPRDERSETAQQIIDRLRVKLAKEPGANLFLMAVQDIRVGGRQSNASYQYTLLSDDLAALREWEPKIRKKLATLPELADVNSDQQDNGAEMNLVYDRDTMARLGIDVQAANSLLNNAFGQRQISTIYQPMNQYKVVMEVDPRYTQDISALEKMFVINNEGKAIPLSYFAKWQPANAPLSVNHQGLSAASTISFNLPTGKSLSDASAAIDRAMTQLGVPSTVRGSFAGTAQVFQETMNSQVILIIAAIATVYIVLGILYESYVHPLTILSTLPSAGVGALLALELFNAPFSLIALIGIMLLIGIVKKNAIMMVDFALEAQRHGNLTPQEAIFQACLLRFRPIMMTTLAALFGALPLVLSGGDGSELRQPLGITIVGGLVMSQLLTLYTTPVVYLFFDRLRLRFSRKPKQTVTE</sequence>
<evidence type="ECO:0000255" key="1">
    <source>
        <dbReference type="HAMAP-Rule" id="MF_01424"/>
    </source>
</evidence>
<keyword id="KW-0997">Cell inner membrane</keyword>
<keyword id="KW-1003">Cell membrane</keyword>
<keyword id="KW-0472">Membrane</keyword>
<keyword id="KW-0812">Transmembrane</keyword>
<keyword id="KW-1133">Transmembrane helix</keyword>
<keyword id="KW-0813">Transport</keyword>
<feature type="chain" id="PRO_1000145669" description="Multidrug resistance protein MdtC">
    <location>
        <begin position="1"/>
        <end position="1025"/>
    </location>
</feature>
<feature type="transmembrane region" description="Helical" evidence="1">
    <location>
        <begin position="3"/>
        <end position="23"/>
    </location>
</feature>
<feature type="transmembrane region" description="Helical" evidence="1">
    <location>
        <begin position="333"/>
        <end position="353"/>
    </location>
</feature>
<feature type="transmembrane region" description="Helical" evidence="1">
    <location>
        <begin position="360"/>
        <end position="380"/>
    </location>
</feature>
<feature type="transmembrane region" description="Helical" evidence="1">
    <location>
        <begin position="387"/>
        <end position="407"/>
    </location>
</feature>
<feature type="transmembrane region" description="Helical" evidence="1">
    <location>
        <begin position="431"/>
        <end position="451"/>
    </location>
</feature>
<feature type="transmembrane region" description="Helical" evidence="1">
    <location>
        <begin position="463"/>
        <end position="483"/>
    </location>
</feature>
<feature type="transmembrane region" description="Helical" evidence="1">
    <location>
        <begin position="528"/>
        <end position="548"/>
    </location>
</feature>
<feature type="transmembrane region" description="Helical" evidence="1">
    <location>
        <begin position="853"/>
        <end position="873"/>
    </location>
</feature>
<feature type="transmembrane region" description="Helical" evidence="1">
    <location>
        <begin position="875"/>
        <end position="895"/>
    </location>
</feature>
<feature type="transmembrane region" description="Helical" evidence="1">
    <location>
        <begin position="897"/>
        <end position="917"/>
    </location>
</feature>
<feature type="transmembrane region" description="Helical" evidence="1">
    <location>
        <begin position="953"/>
        <end position="973"/>
    </location>
</feature>
<feature type="transmembrane region" description="Helical" evidence="1">
    <location>
        <begin position="984"/>
        <end position="1004"/>
    </location>
</feature>
<accession>B7M459</accession>
<gene>
    <name evidence="1" type="primary">mdtC</name>
    <name type="ordered locus">ECIAI1_2152</name>
</gene>
<name>MDTC_ECO8A</name>
<protein>
    <recommendedName>
        <fullName evidence="1">Multidrug resistance protein MdtC</fullName>
    </recommendedName>
    <alternativeName>
        <fullName evidence="1">Multidrug transporter MdtC</fullName>
    </alternativeName>
</protein>
<comment type="function">
    <text evidence="1">The MdtABC tripartite complex confers resistance against novobiocin and deoxycholate.</text>
</comment>
<comment type="subunit">
    <text evidence="1">Part of a tripartite efflux system composed of MdtA, MdtB and MdtC. MdtC forms a heteromultimer with MdtB.</text>
</comment>
<comment type="subcellular location">
    <subcellularLocation>
        <location evidence="1">Cell inner membrane</location>
        <topology evidence="1">Multi-pass membrane protein</topology>
    </subcellularLocation>
</comment>
<comment type="induction">
    <text>The mdtABC operon is transcriptionally activated by BaeR.</text>
</comment>
<comment type="similarity">
    <text evidence="1">Belongs to the resistance-nodulation-cell division (RND) (TC 2.A.6) family. MdtC subfamily.</text>
</comment>
<reference key="1">
    <citation type="journal article" date="2009" name="PLoS Genet.">
        <title>Organised genome dynamics in the Escherichia coli species results in highly diverse adaptive paths.</title>
        <authorList>
            <person name="Touchon M."/>
            <person name="Hoede C."/>
            <person name="Tenaillon O."/>
            <person name="Barbe V."/>
            <person name="Baeriswyl S."/>
            <person name="Bidet P."/>
            <person name="Bingen E."/>
            <person name="Bonacorsi S."/>
            <person name="Bouchier C."/>
            <person name="Bouvet O."/>
            <person name="Calteau A."/>
            <person name="Chiapello H."/>
            <person name="Clermont O."/>
            <person name="Cruveiller S."/>
            <person name="Danchin A."/>
            <person name="Diard M."/>
            <person name="Dossat C."/>
            <person name="Karoui M.E."/>
            <person name="Frapy E."/>
            <person name="Garry L."/>
            <person name="Ghigo J.M."/>
            <person name="Gilles A.M."/>
            <person name="Johnson J."/>
            <person name="Le Bouguenec C."/>
            <person name="Lescat M."/>
            <person name="Mangenot S."/>
            <person name="Martinez-Jehanne V."/>
            <person name="Matic I."/>
            <person name="Nassif X."/>
            <person name="Oztas S."/>
            <person name="Petit M.A."/>
            <person name="Pichon C."/>
            <person name="Rouy Z."/>
            <person name="Ruf C.S."/>
            <person name="Schneider D."/>
            <person name="Tourret J."/>
            <person name="Vacherie B."/>
            <person name="Vallenet D."/>
            <person name="Medigue C."/>
            <person name="Rocha E.P.C."/>
            <person name="Denamur E."/>
        </authorList>
    </citation>
    <scope>NUCLEOTIDE SEQUENCE [LARGE SCALE GENOMIC DNA]</scope>
    <source>
        <strain>IAI1</strain>
    </source>
</reference>
<dbReference type="EMBL" id="CU928160">
    <property type="protein sequence ID" value="CAQ98998.1"/>
    <property type="molecule type" value="Genomic_DNA"/>
</dbReference>
<dbReference type="RefSeq" id="WP_000667549.1">
    <property type="nucleotide sequence ID" value="NC_011741.1"/>
</dbReference>
<dbReference type="SMR" id="B7M459"/>
<dbReference type="KEGG" id="ecr:ECIAI1_2152"/>
<dbReference type="HOGENOM" id="CLU_002755_1_2_6"/>
<dbReference type="GO" id="GO:0005886">
    <property type="term" value="C:plasma membrane"/>
    <property type="evidence" value="ECO:0007669"/>
    <property type="project" value="UniProtKB-SubCell"/>
</dbReference>
<dbReference type="GO" id="GO:0042910">
    <property type="term" value="F:xenobiotic transmembrane transporter activity"/>
    <property type="evidence" value="ECO:0007669"/>
    <property type="project" value="TreeGrafter"/>
</dbReference>
<dbReference type="FunFam" id="1.20.1640.10:FF:000001">
    <property type="entry name" value="Efflux pump membrane transporter"/>
    <property type="match status" value="1"/>
</dbReference>
<dbReference type="FunFam" id="3.30.70.1430:FF:000001">
    <property type="entry name" value="Efflux pump membrane transporter"/>
    <property type="match status" value="1"/>
</dbReference>
<dbReference type="FunFam" id="3.30.2090.10:FF:000004">
    <property type="entry name" value="Multidrug resistance protein MdtC"/>
    <property type="match status" value="1"/>
</dbReference>
<dbReference type="FunFam" id="3.30.2090.10:FF:000005">
    <property type="entry name" value="Multidrug resistance protein MdtC"/>
    <property type="match status" value="1"/>
</dbReference>
<dbReference type="FunFam" id="3.30.70.1430:FF:000004">
    <property type="entry name" value="Multidrug resistance protein MdtC"/>
    <property type="match status" value="1"/>
</dbReference>
<dbReference type="Gene3D" id="3.30.70.1430">
    <property type="entry name" value="Multidrug efflux transporter AcrB pore domain"/>
    <property type="match status" value="2"/>
</dbReference>
<dbReference type="Gene3D" id="3.30.70.1440">
    <property type="entry name" value="Multidrug efflux transporter AcrB pore domain"/>
    <property type="match status" value="1"/>
</dbReference>
<dbReference type="Gene3D" id="3.30.70.1320">
    <property type="entry name" value="Multidrug efflux transporter AcrB pore domain like"/>
    <property type="match status" value="1"/>
</dbReference>
<dbReference type="Gene3D" id="3.30.2090.10">
    <property type="entry name" value="Multidrug efflux transporter AcrB TolC docking domain, DN and DC subdomains"/>
    <property type="match status" value="2"/>
</dbReference>
<dbReference type="Gene3D" id="1.20.1640.10">
    <property type="entry name" value="Multidrug efflux transporter AcrB transmembrane domain"/>
    <property type="match status" value="2"/>
</dbReference>
<dbReference type="HAMAP" id="MF_01424">
    <property type="entry name" value="MdtC"/>
    <property type="match status" value="1"/>
</dbReference>
<dbReference type="InterPro" id="IPR027463">
    <property type="entry name" value="AcrB_DN_DC_subdom"/>
</dbReference>
<dbReference type="InterPro" id="IPR001036">
    <property type="entry name" value="Acrflvin-R"/>
</dbReference>
<dbReference type="InterPro" id="IPR023931">
    <property type="entry name" value="Multidrug-R_MdtC"/>
</dbReference>
<dbReference type="NCBIfam" id="NF007905">
    <property type="entry name" value="PRK10614.1"/>
    <property type="match status" value="1"/>
</dbReference>
<dbReference type="NCBIfam" id="NF033617">
    <property type="entry name" value="RND_permease_2"/>
    <property type="match status" value="1"/>
</dbReference>
<dbReference type="PANTHER" id="PTHR32063">
    <property type="match status" value="1"/>
</dbReference>
<dbReference type="PANTHER" id="PTHR32063:SF34">
    <property type="entry name" value="MULTIDRUG RESISTANCE PROTEIN MDTC"/>
    <property type="match status" value="1"/>
</dbReference>
<dbReference type="Pfam" id="PF00873">
    <property type="entry name" value="ACR_tran"/>
    <property type="match status" value="1"/>
</dbReference>
<dbReference type="PRINTS" id="PR00702">
    <property type="entry name" value="ACRIFLAVINRP"/>
</dbReference>
<dbReference type="SUPFAM" id="SSF82693">
    <property type="entry name" value="Multidrug efflux transporter AcrB pore domain, PN1, PN2, PC1 and PC2 subdomains"/>
    <property type="match status" value="4"/>
</dbReference>
<dbReference type="SUPFAM" id="SSF82714">
    <property type="entry name" value="Multidrug efflux transporter AcrB TolC docking domain, DN and DC subdomains"/>
    <property type="match status" value="2"/>
</dbReference>
<dbReference type="SUPFAM" id="SSF82866">
    <property type="entry name" value="Multidrug efflux transporter AcrB transmembrane domain"/>
    <property type="match status" value="2"/>
</dbReference>
<organism>
    <name type="scientific">Escherichia coli O8 (strain IAI1)</name>
    <dbReference type="NCBI Taxonomy" id="585034"/>
    <lineage>
        <taxon>Bacteria</taxon>
        <taxon>Pseudomonadati</taxon>
        <taxon>Pseudomonadota</taxon>
        <taxon>Gammaproteobacteria</taxon>
        <taxon>Enterobacterales</taxon>
        <taxon>Enterobacteriaceae</taxon>
        <taxon>Escherichia</taxon>
    </lineage>
</organism>
<proteinExistence type="evidence at transcript level"/>